<accession>B4U1C3</accession>
<protein>
    <recommendedName>
        <fullName evidence="1">Serine--tRNA ligase</fullName>
        <ecNumber evidence="1">6.1.1.11</ecNumber>
    </recommendedName>
    <alternativeName>
        <fullName evidence="1">Seryl-tRNA synthetase</fullName>
        <shortName evidence="1">SerRS</shortName>
    </alternativeName>
    <alternativeName>
        <fullName evidence="1">Seryl-tRNA(Ser/Sec) synthetase</fullName>
    </alternativeName>
</protein>
<proteinExistence type="inferred from homology"/>
<name>SYS_STREM</name>
<reference key="1">
    <citation type="journal article" date="2008" name="PLoS ONE">
        <title>Genome sequence of a lancefield group C Streptococcus zooepidemicus strain causing epidemic nephritis: new information about an old disease.</title>
        <authorList>
            <person name="Beres S.B."/>
            <person name="Sesso R."/>
            <person name="Pinto S.W.L."/>
            <person name="Hoe N.P."/>
            <person name="Porcella S.F."/>
            <person name="Deleo F.R."/>
            <person name="Musser J.M."/>
        </authorList>
    </citation>
    <scope>NUCLEOTIDE SEQUENCE [LARGE SCALE GENOMIC DNA]</scope>
    <source>
        <strain>MGCS10565</strain>
    </source>
</reference>
<evidence type="ECO:0000255" key="1">
    <source>
        <dbReference type="HAMAP-Rule" id="MF_00176"/>
    </source>
</evidence>
<dbReference type="EC" id="6.1.1.11" evidence="1"/>
<dbReference type="EMBL" id="CP001129">
    <property type="protein sequence ID" value="ACG61790.1"/>
    <property type="molecule type" value="Genomic_DNA"/>
</dbReference>
<dbReference type="RefSeq" id="WP_012515066.1">
    <property type="nucleotide sequence ID" value="NC_011134.1"/>
</dbReference>
<dbReference type="SMR" id="B4U1C3"/>
<dbReference type="KEGG" id="sez:Sez_0418"/>
<dbReference type="HOGENOM" id="CLU_023797_1_1_9"/>
<dbReference type="UniPathway" id="UPA00906">
    <property type="reaction ID" value="UER00895"/>
</dbReference>
<dbReference type="Proteomes" id="UP000001873">
    <property type="component" value="Chromosome"/>
</dbReference>
<dbReference type="GO" id="GO:0005737">
    <property type="term" value="C:cytoplasm"/>
    <property type="evidence" value="ECO:0007669"/>
    <property type="project" value="UniProtKB-SubCell"/>
</dbReference>
<dbReference type="GO" id="GO:0005524">
    <property type="term" value="F:ATP binding"/>
    <property type="evidence" value="ECO:0007669"/>
    <property type="project" value="UniProtKB-UniRule"/>
</dbReference>
<dbReference type="GO" id="GO:0140096">
    <property type="term" value="F:catalytic activity, acting on a protein"/>
    <property type="evidence" value="ECO:0007669"/>
    <property type="project" value="UniProtKB-ARBA"/>
</dbReference>
<dbReference type="GO" id="GO:0004828">
    <property type="term" value="F:serine-tRNA ligase activity"/>
    <property type="evidence" value="ECO:0007669"/>
    <property type="project" value="UniProtKB-UniRule"/>
</dbReference>
<dbReference type="GO" id="GO:0016740">
    <property type="term" value="F:transferase activity"/>
    <property type="evidence" value="ECO:0007669"/>
    <property type="project" value="UniProtKB-ARBA"/>
</dbReference>
<dbReference type="GO" id="GO:0016260">
    <property type="term" value="P:selenocysteine biosynthetic process"/>
    <property type="evidence" value="ECO:0007669"/>
    <property type="project" value="UniProtKB-UniRule"/>
</dbReference>
<dbReference type="GO" id="GO:0006434">
    <property type="term" value="P:seryl-tRNA aminoacylation"/>
    <property type="evidence" value="ECO:0007669"/>
    <property type="project" value="UniProtKB-UniRule"/>
</dbReference>
<dbReference type="CDD" id="cd00770">
    <property type="entry name" value="SerRS_core"/>
    <property type="match status" value="1"/>
</dbReference>
<dbReference type="Gene3D" id="3.30.930.10">
    <property type="entry name" value="Bira Bifunctional Protein, Domain 2"/>
    <property type="match status" value="1"/>
</dbReference>
<dbReference type="Gene3D" id="1.10.287.40">
    <property type="entry name" value="Serine-tRNA synthetase, tRNA binding domain"/>
    <property type="match status" value="1"/>
</dbReference>
<dbReference type="HAMAP" id="MF_00176">
    <property type="entry name" value="Ser_tRNA_synth_type1"/>
    <property type="match status" value="1"/>
</dbReference>
<dbReference type="InterPro" id="IPR002314">
    <property type="entry name" value="aa-tRNA-synt_IIb"/>
</dbReference>
<dbReference type="InterPro" id="IPR006195">
    <property type="entry name" value="aa-tRNA-synth_II"/>
</dbReference>
<dbReference type="InterPro" id="IPR045864">
    <property type="entry name" value="aa-tRNA-synth_II/BPL/LPL"/>
</dbReference>
<dbReference type="InterPro" id="IPR002317">
    <property type="entry name" value="Ser-tRNA-ligase_type_1"/>
</dbReference>
<dbReference type="InterPro" id="IPR015866">
    <property type="entry name" value="Ser-tRNA-synth_1_N"/>
</dbReference>
<dbReference type="InterPro" id="IPR042103">
    <property type="entry name" value="SerRS_1_N_sf"/>
</dbReference>
<dbReference type="InterPro" id="IPR033729">
    <property type="entry name" value="SerRS_core"/>
</dbReference>
<dbReference type="InterPro" id="IPR010978">
    <property type="entry name" value="tRNA-bd_arm"/>
</dbReference>
<dbReference type="NCBIfam" id="TIGR00414">
    <property type="entry name" value="serS"/>
    <property type="match status" value="1"/>
</dbReference>
<dbReference type="PANTHER" id="PTHR43697:SF1">
    <property type="entry name" value="SERINE--TRNA LIGASE"/>
    <property type="match status" value="1"/>
</dbReference>
<dbReference type="PANTHER" id="PTHR43697">
    <property type="entry name" value="SERYL-TRNA SYNTHETASE"/>
    <property type="match status" value="1"/>
</dbReference>
<dbReference type="Pfam" id="PF02403">
    <property type="entry name" value="Seryl_tRNA_N"/>
    <property type="match status" value="1"/>
</dbReference>
<dbReference type="Pfam" id="PF00587">
    <property type="entry name" value="tRNA-synt_2b"/>
    <property type="match status" value="1"/>
</dbReference>
<dbReference type="PIRSF" id="PIRSF001529">
    <property type="entry name" value="Ser-tRNA-synth_IIa"/>
    <property type="match status" value="1"/>
</dbReference>
<dbReference type="PRINTS" id="PR00981">
    <property type="entry name" value="TRNASYNTHSER"/>
</dbReference>
<dbReference type="SUPFAM" id="SSF55681">
    <property type="entry name" value="Class II aaRS and biotin synthetases"/>
    <property type="match status" value="1"/>
</dbReference>
<dbReference type="SUPFAM" id="SSF46589">
    <property type="entry name" value="tRNA-binding arm"/>
    <property type="match status" value="1"/>
</dbReference>
<dbReference type="PROSITE" id="PS50862">
    <property type="entry name" value="AA_TRNA_LIGASE_II"/>
    <property type="match status" value="1"/>
</dbReference>
<keyword id="KW-0030">Aminoacyl-tRNA synthetase</keyword>
<keyword id="KW-0067">ATP-binding</keyword>
<keyword id="KW-0963">Cytoplasm</keyword>
<keyword id="KW-0436">Ligase</keyword>
<keyword id="KW-0547">Nucleotide-binding</keyword>
<keyword id="KW-0648">Protein biosynthesis</keyword>
<organism>
    <name type="scientific">Streptococcus equi subsp. zooepidemicus (strain MGCS10565)</name>
    <dbReference type="NCBI Taxonomy" id="552526"/>
    <lineage>
        <taxon>Bacteria</taxon>
        <taxon>Bacillati</taxon>
        <taxon>Bacillota</taxon>
        <taxon>Bacilli</taxon>
        <taxon>Lactobacillales</taxon>
        <taxon>Streptococcaceae</taxon>
        <taxon>Streptococcus</taxon>
    </lineage>
</organism>
<gene>
    <name evidence="1" type="primary">serS</name>
    <name type="ordered locus">Sez_0418</name>
</gene>
<sequence length="425" mass="48108">MLDLKRIRTDFDAVAAKLKTRGVSEDTLTTLKALDEQRRALLVQTEELKAQRNIASAAIAQAKRQKKDASQQIADMQQLAANIKVIDAKLADIDQEITSIITVLPNTPHDSVPIGADEEDNVEIRRWGKPRQFDFDIKAHWDLGEALDILDWERGAKVTGARFLFYKNLGARLERALYNFMLDEHLKEGYQEIIPPYMVNHDSMFGTGQYPKFKEDTFELDGTNFVLIPTAEVPLTNYYRGDIIDGKELPIYFTAMSPSFRSEAGSAGRDTRGLIRLHQFHKVEMVKFAKPETSYDELEKMTANAEHILQKLKLPYRVLALCTGDMGFSAAKTYDLEVWIPAQNTYREISSCSNTEDFQARRAQIRYRDEADGKVKLLHTLNGSGLAVGRTVAAILENYQNEDGSVTIPEVLRPYMGGLELIKPR</sequence>
<comment type="function">
    <text evidence="1">Catalyzes the attachment of serine to tRNA(Ser). Is also able to aminoacylate tRNA(Sec) with serine, to form the misacylated tRNA L-seryl-tRNA(Sec), which will be further converted into selenocysteinyl-tRNA(Sec).</text>
</comment>
<comment type="catalytic activity">
    <reaction evidence="1">
        <text>tRNA(Ser) + L-serine + ATP = L-seryl-tRNA(Ser) + AMP + diphosphate + H(+)</text>
        <dbReference type="Rhea" id="RHEA:12292"/>
        <dbReference type="Rhea" id="RHEA-COMP:9669"/>
        <dbReference type="Rhea" id="RHEA-COMP:9703"/>
        <dbReference type="ChEBI" id="CHEBI:15378"/>
        <dbReference type="ChEBI" id="CHEBI:30616"/>
        <dbReference type="ChEBI" id="CHEBI:33019"/>
        <dbReference type="ChEBI" id="CHEBI:33384"/>
        <dbReference type="ChEBI" id="CHEBI:78442"/>
        <dbReference type="ChEBI" id="CHEBI:78533"/>
        <dbReference type="ChEBI" id="CHEBI:456215"/>
        <dbReference type="EC" id="6.1.1.11"/>
    </reaction>
</comment>
<comment type="catalytic activity">
    <reaction evidence="1">
        <text>tRNA(Sec) + L-serine + ATP = L-seryl-tRNA(Sec) + AMP + diphosphate + H(+)</text>
        <dbReference type="Rhea" id="RHEA:42580"/>
        <dbReference type="Rhea" id="RHEA-COMP:9742"/>
        <dbReference type="Rhea" id="RHEA-COMP:10128"/>
        <dbReference type="ChEBI" id="CHEBI:15378"/>
        <dbReference type="ChEBI" id="CHEBI:30616"/>
        <dbReference type="ChEBI" id="CHEBI:33019"/>
        <dbReference type="ChEBI" id="CHEBI:33384"/>
        <dbReference type="ChEBI" id="CHEBI:78442"/>
        <dbReference type="ChEBI" id="CHEBI:78533"/>
        <dbReference type="ChEBI" id="CHEBI:456215"/>
        <dbReference type="EC" id="6.1.1.11"/>
    </reaction>
</comment>
<comment type="pathway">
    <text evidence="1">Aminoacyl-tRNA biosynthesis; selenocysteinyl-tRNA(Sec) biosynthesis; L-seryl-tRNA(Sec) from L-serine and tRNA(Sec): step 1/1.</text>
</comment>
<comment type="subunit">
    <text evidence="1">Homodimer. The tRNA molecule binds across the dimer.</text>
</comment>
<comment type="subcellular location">
    <subcellularLocation>
        <location evidence="1">Cytoplasm</location>
    </subcellularLocation>
</comment>
<comment type="domain">
    <text evidence="1">Consists of two distinct domains, a catalytic core and a N-terminal extension that is involved in tRNA binding.</text>
</comment>
<comment type="similarity">
    <text evidence="1">Belongs to the class-II aminoacyl-tRNA synthetase family. Type-1 seryl-tRNA synthetase subfamily.</text>
</comment>
<feature type="chain" id="PRO_1000098126" description="Serine--tRNA ligase">
    <location>
        <begin position="1"/>
        <end position="425"/>
    </location>
</feature>
<feature type="binding site" evidence="1">
    <location>
        <begin position="230"/>
        <end position="232"/>
    </location>
    <ligand>
        <name>L-serine</name>
        <dbReference type="ChEBI" id="CHEBI:33384"/>
    </ligand>
</feature>
<feature type="binding site" evidence="1">
    <location>
        <begin position="261"/>
        <end position="263"/>
    </location>
    <ligand>
        <name>ATP</name>
        <dbReference type="ChEBI" id="CHEBI:30616"/>
    </ligand>
</feature>
<feature type="binding site" evidence="1">
    <location>
        <position position="284"/>
    </location>
    <ligand>
        <name>L-serine</name>
        <dbReference type="ChEBI" id="CHEBI:33384"/>
    </ligand>
</feature>
<feature type="binding site" evidence="1">
    <location>
        <begin position="348"/>
        <end position="351"/>
    </location>
    <ligand>
        <name>ATP</name>
        <dbReference type="ChEBI" id="CHEBI:30616"/>
    </ligand>
</feature>
<feature type="binding site" evidence="1">
    <location>
        <position position="384"/>
    </location>
    <ligand>
        <name>L-serine</name>
        <dbReference type="ChEBI" id="CHEBI:33384"/>
    </ligand>
</feature>